<reference key="1">
    <citation type="journal article" date="2001" name="Proc. Natl. Acad. Sci. U.S.A.">
        <title>The complete sequence of the 1,683-kb pSymB megaplasmid from the N2-fixing endosymbiont Sinorhizobium meliloti.</title>
        <authorList>
            <person name="Finan T.M."/>
            <person name="Weidner S."/>
            <person name="Wong K."/>
            <person name="Buhrmester J."/>
            <person name="Chain P."/>
            <person name="Vorhoelter F.J."/>
            <person name="Hernandez-Lucas I."/>
            <person name="Becker A."/>
            <person name="Cowie A."/>
            <person name="Gouzy J."/>
            <person name="Golding B."/>
            <person name="Puehler A."/>
        </authorList>
    </citation>
    <scope>NUCLEOTIDE SEQUENCE [LARGE SCALE GENOMIC DNA]</scope>
    <source>
        <strain>1021</strain>
    </source>
</reference>
<reference key="2">
    <citation type="journal article" date="2001" name="Science">
        <title>The composite genome of the legume symbiont Sinorhizobium meliloti.</title>
        <authorList>
            <person name="Galibert F."/>
            <person name="Finan T.M."/>
            <person name="Long S.R."/>
            <person name="Puehler A."/>
            <person name="Abola P."/>
            <person name="Ampe F."/>
            <person name="Barloy-Hubler F."/>
            <person name="Barnett M.J."/>
            <person name="Becker A."/>
            <person name="Boistard P."/>
            <person name="Bothe G."/>
            <person name="Boutry M."/>
            <person name="Bowser L."/>
            <person name="Buhrmester J."/>
            <person name="Cadieu E."/>
            <person name="Capela D."/>
            <person name="Chain P."/>
            <person name="Cowie A."/>
            <person name="Davis R.W."/>
            <person name="Dreano S."/>
            <person name="Federspiel N.A."/>
            <person name="Fisher R.F."/>
            <person name="Gloux S."/>
            <person name="Godrie T."/>
            <person name="Goffeau A."/>
            <person name="Golding B."/>
            <person name="Gouzy J."/>
            <person name="Gurjal M."/>
            <person name="Hernandez-Lucas I."/>
            <person name="Hong A."/>
            <person name="Huizar L."/>
            <person name="Hyman R.W."/>
            <person name="Jones T."/>
            <person name="Kahn D."/>
            <person name="Kahn M.L."/>
            <person name="Kalman S."/>
            <person name="Keating D.H."/>
            <person name="Kiss E."/>
            <person name="Komp C."/>
            <person name="Lelaure V."/>
            <person name="Masuy D."/>
            <person name="Palm C."/>
            <person name="Peck M.C."/>
            <person name="Pohl T.M."/>
            <person name="Portetelle D."/>
            <person name="Purnelle B."/>
            <person name="Ramsperger U."/>
            <person name="Surzycki R."/>
            <person name="Thebault P."/>
            <person name="Vandenbol M."/>
            <person name="Vorhoelter F.J."/>
            <person name="Weidner S."/>
            <person name="Wells D.H."/>
            <person name="Wong K."/>
            <person name="Yeh K.-C."/>
            <person name="Batut J."/>
        </authorList>
    </citation>
    <scope>NUCLEOTIDE SEQUENCE [LARGE SCALE GENOMIC DNA]</scope>
    <source>
        <strain>1021</strain>
    </source>
</reference>
<gene>
    <name evidence="1" type="primary">allA2</name>
    <name type="ordered locus">RB1384</name>
    <name type="ORF">SMb20677</name>
</gene>
<accession>Q92TW1</accession>
<sequence>MIPLPIRPLSHSEFAPFGDVIEPDDAKSFPINAGKCIRYHDLARVETSGPEARTLVSLLKGEPYDIPLTLKMVERHPLGSQAFIPLTGNPFLVVVAPDEGGEPGEPIAFETGPGQGVNIAQNVWHGILTPLRSTSEFVVIDRGGSGCNLEEHFFEKPYQVEYA</sequence>
<protein>
    <recommendedName>
        <fullName evidence="1">Ureidoglycolate lyase 2</fullName>
        <ecNumber evidence="1">4.3.2.3</ecNumber>
    </recommendedName>
    <alternativeName>
        <fullName evidence="1">Ureidoglycolatase 2</fullName>
    </alternativeName>
</protein>
<keyword id="KW-0456">Lyase</keyword>
<keyword id="KW-0614">Plasmid</keyword>
<keyword id="KW-0659">Purine metabolism</keyword>
<keyword id="KW-1185">Reference proteome</keyword>
<name>ALLA2_RHIME</name>
<feature type="chain" id="PRO_0000120555" description="Ureidoglycolate lyase 2">
    <location>
        <begin position="1"/>
        <end position="163"/>
    </location>
</feature>
<organism>
    <name type="scientific">Rhizobium meliloti (strain 1021)</name>
    <name type="common">Ensifer meliloti</name>
    <name type="synonym">Sinorhizobium meliloti</name>
    <dbReference type="NCBI Taxonomy" id="266834"/>
    <lineage>
        <taxon>Bacteria</taxon>
        <taxon>Pseudomonadati</taxon>
        <taxon>Pseudomonadota</taxon>
        <taxon>Alphaproteobacteria</taxon>
        <taxon>Hyphomicrobiales</taxon>
        <taxon>Rhizobiaceae</taxon>
        <taxon>Sinorhizobium/Ensifer group</taxon>
        <taxon>Sinorhizobium</taxon>
    </lineage>
</organism>
<proteinExistence type="inferred from homology"/>
<comment type="function">
    <text evidence="1">Catalyzes the catabolism of the allantoin degradation intermediate (S)-ureidoglycolate, generating urea and glyoxylate. Involved in the utilization of allantoin as nitrogen source.</text>
</comment>
<comment type="catalytic activity">
    <reaction evidence="1">
        <text>(S)-ureidoglycolate = urea + glyoxylate</text>
        <dbReference type="Rhea" id="RHEA:11304"/>
        <dbReference type="ChEBI" id="CHEBI:16199"/>
        <dbReference type="ChEBI" id="CHEBI:36655"/>
        <dbReference type="ChEBI" id="CHEBI:57296"/>
        <dbReference type="EC" id="4.3.2.3"/>
    </reaction>
</comment>
<comment type="cofactor">
    <cofactor evidence="1">
        <name>Ni(2+)</name>
        <dbReference type="ChEBI" id="CHEBI:49786"/>
    </cofactor>
</comment>
<comment type="pathway">
    <text evidence="1">Nitrogen metabolism; (S)-allantoin degradation.</text>
</comment>
<comment type="subunit">
    <text evidence="1">Homodimer.</text>
</comment>
<comment type="similarity">
    <text evidence="1">Belongs to the ureidoglycolate lyase family.</text>
</comment>
<dbReference type="EC" id="4.3.2.3" evidence="1"/>
<dbReference type="EMBL" id="AL591985">
    <property type="protein sequence ID" value="CAC49784.1"/>
    <property type="molecule type" value="Genomic_DNA"/>
</dbReference>
<dbReference type="PIR" id="H96014">
    <property type="entry name" value="H96014"/>
</dbReference>
<dbReference type="RefSeq" id="NP_437924.1">
    <property type="nucleotide sequence ID" value="NC_003078.1"/>
</dbReference>
<dbReference type="RefSeq" id="WP_010976201.1">
    <property type="nucleotide sequence ID" value="NC_003078.1"/>
</dbReference>
<dbReference type="SMR" id="Q92TW1"/>
<dbReference type="EnsemblBacteria" id="CAC49784">
    <property type="protein sequence ID" value="CAC49784"/>
    <property type="gene ID" value="SM_b20677"/>
</dbReference>
<dbReference type="KEGG" id="sme:SM_b20677"/>
<dbReference type="PATRIC" id="fig|266834.11.peg.6306"/>
<dbReference type="eggNOG" id="COG3194">
    <property type="taxonomic scope" value="Bacteria"/>
</dbReference>
<dbReference type="HOGENOM" id="CLU_070848_1_0_5"/>
<dbReference type="OrthoDB" id="9804602at2"/>
<dbReference type="UniPathway" id="UPA00395"/>
<dbReference type="Proteomes" id="UP000001976">
    <property type="component" value="Plasmid pSymB"/>
</dbReference>
<dbReference type="GO" id="GO:0004848">
    <property type="term" value="F:ureidoglycolate hydrolase activity"/>
    <property type="evidence" value="ECO:0007669"/>
    <property type="project" value="InterPro"/>
</dbReference>
<dbReference type="GO" id="GO:0050385">
    <property type="term" value="F:ureidoglycolate lyase activity"/>
    <property type="evidence" value="ECO:0007669"/>
    <property type="project" value="UniProtKB-UniRule"/>
</dbReference>
<dbReference type="GO" id="GO:0000256">
    <property type="term" value="P:allantoin catabolic process"/>
    <property type="evidence" value="ECO:0007669"/>
    <property type="project" value="UniProtKB-UniRule"/>
</dbReference>
<dbReference type="GO" id="GO:0006145">
    <property type="term" value="P:purine nucleobase catabolic process"/>
    <property type="evidence" value="ECO:0007669"/>
    <property type="project" value="UniProtKB-UniRule"/>
</dbReference>
<dbReference type="CDD" id="cd20298">
    <property type="entry name" value="cupin_UAH"/>
    <property type="match status" value="1"/>
</dbReference>
<dbReference type="Gene3D" id="2.60.120.480">
    <property type="entry name" value="Ureidoglycolate hydrolase"/>
    <property type="match status" value="1"/>
</dbReference>
<dbReference type="HAMAP" id="MF_00616">
    <property type="entry name" value="Ureidogly_lyase"/>
    <property type="match status" value="1"/>
</dbReference>
<dbReference type="InterPro" id="IPR011051">
    <property type="entry name" value="RmlC_Cupin_sf"/>
</dbReference>
<dbReference type="InterPro" id="IPR047233">
    <property type="entry name" value="UAH_cupin"/>
</dbReference>
<dbReference type="InterPro" id="IPR007247">
    <property type="entry name" value="Ureidogly_lyase"/>
</dbReference>
<dbReference type="InterPro" id="IPR023525">
    <property type="entry name" value="Ureidogly_lyase_bac"/>
</dbReference>
<dbReference type="InterPro" id="IPR024060">
    <property type="entry name" value="Ureidoglycolate_lyase_dom_sf"/>
</dbReference>
<dbReference type="NCBIfam" id="NF009932">
    <property type="entry name" value="PRK13395.1"/>
    <property type="match status" value="1"/>
</dbReference>
<dbReference type="PANTHER" id="PTHR21221">
    <property type="entry name" value="UREIDOGLYCOLATE HYDROLASE"/>
    <property type="match status" value="1"/>
</dbReference>
<dbReference type="PANTHER" id="PTHR21221:SF1">
    <property type="entry name" value="UREIDOGLYCOLATE LYASE"/>
    <property type="match status" value="1"/>
</dbReference>
<dbReference type="Pfam" id="PF04115">
    <property type="entry name" value="Ureidogly_lyase"/>
    <property type="match status" value="1"/>
</dbReference>
<dbReference type="PIRSF" id="PIRSF017306">
    <property type="entry name" value="Ureidogly_hydro"/>
    <property type="match status" value="1"/>
</dbReference>
<dbReference type="SUPFAM" id="SSF51182">
    <property type="entry name" value="RmlC-like cupins"/>
    <property type="match status" value="1"/>
</dbReference>
<evidence type="ECO:0000255" key="1">
    <source>
        <dbReference type="HAMAP-Rule" id="MF_00616"/>
    </source>
</evidence>
<geneLocation type="plasmid">
    <name>pSymB</name>
    <name>megaplasmid 2</name>
</geneLocation>